<proteinExistence type="evidence at transcript level"/>
<keyword id="KW-0479">Metal-binding</keyword>
<keyword id="KW-0539">Nucleus</keyword>
<keyword id="KW-1185">Reference proteome</keyword>
<keyword id="KW-0804">Transcription</keyword>
<keyword id="KW-0805">Transcription regulation</keyword>
<keyword id="KW-0862">Zinc</keyword>
<keyword id="KW-0863">Zinc-finger</keyword>
<evidence type="ECO:0000250" key="1"/>
<evidence type="ECO:0000255" key="2">
    <source>
        <dbReference type="PROSITE-ProRule" id="PRU00316"/>
    </source>
</evidence>
<evidence type="ECO:0000269" key="3">
    <source>
    </source>
</evidence>
<evidence type="ECO:0000269" key="4">
    <source>
    </source>
</evidence>
<evidence type="ECO:0000305" key="5"/>
<accession>Q5BPT4</accession>
<accession>A1DW35</accession>
<accession>O64618</accession>
<accession>Q84N40</accession>
<feature type="chain" id="PRO_0000422541" description="VIN3-like protein 3">
    <location>
        <begin position="1"/>
        <end position="529"/>
    </location>
</feature>
<feature type="domain" description="Fibronectin type-III" evidence="2">
    <location>
        <begin position="312"/>
        <end position="411"/>
    </location>
</feature>
<feature type="zinc finger region" description="PHD-type">
    <location>
        <begin position="137"/>
        <end position="207"/>
    </location>
</feature>
<feature type="region of interest" description="VIN3-Interacting Domain (VID)" evidence="1">
    <location>
        <begin position="421"/>
        <end position="529"/>
    </location>
</feature>
<feature type="short sequence motif" description="Nuclear localization signal" evidence="1">
    <location>
        <begin position="97"/>
        <end position="104"/>
    </location>
</feature>
<feature type="short sequence motif" description="Nuclear localization signal" evidence="1">
    <location>
        <begin position="214"/>
        <end position="221"/>
    </location>
</feature>
<feature type="sequence conflict" description="In Ref. 3; AAP22497." evidence="5" ref="3">
    <original>N</original>
    <variation>S</variation>
    <location>
        <position position="200"/>
    </location>
</feature>
<dbReference type="EMBL" id="AC003673">
    <property type="protein sequence ID" value="AAC09024.1"/>
    <property type="status" value="ALT_SEQ"/>
    <property type="molecule type" value="Genomic_DNA"/>
</dbReference>
<dbReference type="EMBL" id="CP002685">
    <property type="protein sequence ID" value="AEC06820.1"/>
    <property type="molecule type" value="Genomic_DNA"/>
</dbReference>
<dbReference type="EMBL" id="AY262053">
    <property type="protein sequence ID" value="AAP22497.1"/>
    <property type="molecule type" value="mRNA"/>
</dbReference>
<dbReference type="EMBL" id="AY924744">
    <property type="protein sequence ID" value="AAX23819.1"/>
    <property type="molecule type" value="mRNA"/>
</dbReference>
<dbReference type="EMBL" id="EF064793">
    <property type="protein sequence ID" value="ABL01540.1"/>
    <property type="molecule type" value="mRNA"/>
</dbReference>
<dbReference type="PIR" id="T01616">
    <property type="entry name" value="T01616"/>
</dbReference>
<dbReference type="RefSeq" id="NP_179478.4">
    <property type="nucleotide sequence ID" value="NM_127444.4"/>
</dbReference>
<dbReference type="SMR" id="Q5BPT4"/>
<dbReference type="BioGRID" id="1761">
    <property type="interactions" value="1"/>
</dbReference>
<dbReference type="STRING" id="3702.Q5BPT4"/>
<dbReference type="iPTMnet" id="Q5BPT4"/>
<dbReference type="PaxDb" id="3702-AT2G18880.1"/>
<dbReference type="EnsemblPlants" id="AT2G18880.1">
    <property type="protein sequence ID" value="AT2G18880.1"/>
    <property type="gene ID" value="AT2G18880"/>
</dbReference>
<dbReference type="GeneID" id="816404"/>
<dbReference type="Gramene" id="AT2G18880.1">
    <property type="protein sequence ID" value="AT2G18880.1"/>
    <property type="gene ID" value="AT2G18880"/>
</dbReference>
<dbReference type="KEGG" id="ath:AT2G18880"/>
<dbReference type="Araport" id="AT2G18880"/>
<dbReference type="TAIR" id="AT2G18880">
    <property type="gene designation" value="VEL2"/>
</dbReference>
<dbReference type="eggNOG" id="ENOG502QR8D">
    <property type="taxonomic scope" value="Eukaryota"/>
</dbReference>
<dbReference type="HOGENOM" id="CLU_016873_0_0_1"/>
<dbReference type="InParanoid" id="Q5BPT4"/>
<dbReference type="OMA" id="REEATFC"/>
<dbReference type="PhylomeDB" id="Q5BPT4"/>
<dbReference type="PRO" id="PR:Q5BPT4"/>
<dbReference type="Proteomes" id="UP000006548">
    <property type="component" value="Chromosome 2"/>
</dbReference>
<dbReference type="ExpressionAtlas" id="Q5BPT4">
    <property type="expression patterns" value="baseline and differential"/>
</dbReference>
<dbReference type="GO" id="GO:0005634">
    <property type="term" value="C:nucleus"/>
    <property type="evidence" value="ECO:0007669"/>
    <property type="project" value="UniProtKB-SubCell"/>
</dbReference>
<dbReference type="GO" id="GO:0008270">
    <property type="term" value="F:zinc ion binding"/>
    <property type="evidence" value="ECO:0007669"/>
    <property type="project" value="UniProtKB-KW"/>
</dbReference>
<dbReference type="GO" id="GO:0070417">
    <property type="term" value="P:cellular response to cold"/>
    <property type="evidence" value="ECO:0000270"/>
    <property type="project" value="UniProtKB"/>
</dbReference>
<dbReference type="GO" id="GO:0040029">
    <property type="term" value="P:epigenetic regulation of gene expression"/>
    <property type="evidence" value="ECO:0007669"/>
    <property type="project" value="InterPro"/>
</dbReference>
<dbReference type="GO" id="GO:0009409">
    <property type="term" value="P:response to cold"/>
    <property type="evidence" value="ECO:0000270"/>
    <property type="project" value="UniProtKB"/>
</dbReference>
<dbReference type="GO" id="GO:0010048">
    <property type="term" value="P:vernalization response"/>
    <property type="evidence" value="ECO:0007669"/>
    <property type="project" value="InterPro"/>
</dbReference>
<dbReference type="CDD" id="cd00063">
    <property type="entry name" value="FN3"/>
    <property type="match status" value="1"/>
</dbReference>
<dbReference type="CDD" id="cd15521">
    <property type="entry name" value="PHD_VIN3_plant"/>
    <property type="match status" value="1"/>
</dbReference>
<dbReference type="Gene3D" id="2.60.40.10">
    <property type="entry name" value="Immunoglobulins"/>
    <property type="match status" value="1"/>
</dbReference>
<dbReference type="InterPro" id="IPR003961">
    <property type="entry name" value="FN3_dom"/>
</dbReference>
<dbReference type="InterPro" id="IPR036116">
    <property type="entry name" value="FN3_sf"/>
</dbReference>
<dbReference type="InterPro" id="IPR013783">
    <property type="entry name" value="Ig-like_fold"/>
</dbReference>
<dbReference type="InterPro" id="IPR032881">
    <property type="entry name" value="Oberon-like_PHD"/>
</dbReference>
<dbReference type="InterPro" id="IPR044514">
    <property type="entry name" value="VIN3-like"/>
</dbReference>
<dbReference type="InterPro" id="IPR056990">
    <property type="entry name" value="VIN3-like_C"/>
</dbReference>
<dbReference type="PANTHER" id="PTHR46286">
    <property type="entry name" value="VIN3-LIKE PROTEIN 2-RELATED"/>
    <property type="match status" value="1"/>
</dbReference>
<dbReference type="PANTHER" id="PTHR46286:SF9">
    <property type="entry name" value="VIN3-LIKE PROTEIN 3"/>
    <property type="match status" value="1"/>
</dbReference>
<dbReference type="Pfam" id="PF07227">
    <property type="entry name" value="PHD_Oberon"/>
    <property type="match status" value="1"/>
</dbReference>
<dbReference type="Pfam" id="PF23380">
    <property type="entry name" value="VIN3_C"/>
    <property type="match status" value="1"/>
</dbReference>
<dbReference type="SUPFAM" id="SSF49265">
    <property type="entry name" value="Fibronectin type III"/>
    <property type="match status" value="1"/>
</dbReference>
<dbReference type="PROSITE" id="PS50853">
    <property type="entry name" value="FN3"/>
    <property type="match status" value="1"/>
</dbReference>
<comment type="function">
    <text evidence="1">Involved in both the vernalization and photoperiod pathways by regulating gene expression.</text>
</comment>
<comment type="subunit">
    <text evidence="1">Interacts with VIN3.</text>
</comment>
<comment type="subcellular location">
    <subcellularLocation>
        <location evidence="1">Nucleus</location>
    </subcellularLocation>
    <text evidence="1">Probably DNA-associated.</text>
</comment>
<comment type="induction">
    <text evidence="3 4">By cold, especially after vernalization and transfer to warm temperatures (e.g. 40 days at 4 degrees Celsius followed by 14 days at 22 degrees Celsius).</text>
</comment>
<comment type="sequence caution" evidence="5">
    <conflict type="erroneous gene model prediction">
        <sequence resource="EMBL-CDS" id="AAC09024"/>
    </conflict>
</comment>
<protein>
    <recommendedName>
        <fullName>VIN3-like protein 3</fullName>
    </recommendedName>
    <alternativeName>
        <fullName>Vernalization5/VIN3-like protein 2</fullName>
    </alternativeName>
</protein>
<sequence length="529" mass="59834">MASFHKGAAGDSMGSSKMSFDQRRQLVLKLSKESEREFKEVLKDWSCNEIRELLRAESKKDIKYTGLTKDEIITRLFNIVSKKNTRDHEVEEIIPSPKRQKRDLVTPLAKAKGKGKMYCQNLACQNKLREEATFCKRCSCCICFKYDDNKDPSLWLTCNSDSQFDGESCGLSCHLNCAFDSEKSGLKEDTPSSDIDGCFNCVSCGKTNSKIECLKKQLIIANEERRVGVFCYRILLAHKLLKGTKKYIIVSEEVEKAVMHLKNEFGVPISCLPSKMSRGLVNRLCCAEKVKKHCSSALKELDGLPLPSTIQGSMKIRIESVLATSVTFDIEAEESFSWGDTNHYRMVYRKVSEKHSSKDLTRELFSTSSHQRFTVMELTPATEYWFKIVSFSGVEELSVDEFIVSTKTLQDEEVAAVLLNMSNCNNANKMEKSGSCSFGFEECVNLIRQLECSGQVKSDFRKKFLTWYCLKATDKEKHVVEIFVDTFKDDKEALAKQLIDTFSDCITRKHPEIGGGSESAGVSLILLQD</sequence>
<reference key="1">
    <citation type="journal article" date="1999" name="Nature">
        <title>Sequence and analysis of chromosome 2 of the plant Arabidopsis thaliana.</title>
        <authorList>
            <person name="Lin X."/>
            <person name="Kaul S."/>
            <person name="Rounsley S.D."/>
            <person name="Shea T.P."/>
            <person name="Benito M.-I."/>
            <person name="Town C.D."/>
            <person name="Fujii C.Y."/>
            <person name="Mason T.M."/>
            <person name="Bowman C.L."/>
            <person name="Barnstead M.E."/>
            <person name="Feldblyum T.V."/>
            <person name="Buell C.R."/>
            <person name="Ketchum K.A."/>
            <person name="Lee J.J."/>
            <person name="Ronning C.M."/>
            <person name="Koo H.L."/>
            <person name="Moffat K.S."/>
            <person name="Cronin L.A."/>
            <person name="Shen M."/>
            <person name="Pai G."/>
            <person name="Van Aken S."/>
            <person name="Umayam L."/>
            <person name="Tallon L.J."/>
            <person name="Gill J.E."/>
            <person name="Adams M.D."/>
            <person name="Carrera A.J."/>
            <person name="Creasy T.H."/>
            <person name="Goodman H.M."/>
            <person name="Somerville C.R."/>
            <person name="Copenhaver G.P."/>
            <person name="Preuss D."/>
            <person name="Nierman W.C."/>
            <person name="White O."/>
            <person name="Eisen J.A."/>
            <person name="Salzberg S.L."/>
            <person name="Fraser C.M."/>
            <person name="Venter J.C."/>
        </authorList>
    </citation>
    <scope>NUCLEOTIDE SEQUENCE [LARGE SCALE GENOMIC DNA]</scope>
    <source>
        <strain>cv. Columbia</strain>
    </source>
</reference>
<reference key="2">
    <citation type="journal article" date="2017" name="Plant J.">
        <title>Araport11: a complete reannotation of the Arabidopsis thaliana reference genome.</title>
        <authorList>
            <person name="Cheng C.Y."/>
            <person name="Krishnakumar V."/>
            <person name="Chan A.P."/>
            <person name="Thibaud-Nissen F."/>
            <person name="Schobel S."/>
            <person name="Town C.D."/>
        </authorList>
    </citation>
    <scope>GENOME REANNOTATION</scope>
    <source>
        <strain>cv. Columbia</strain>
    </source>
</reference>
<reference key="3">
    <citation type="journal article" date="2002" name="Plant Physiol.">
        <title>Cloning and sequencing of cDNAs for hypothetical genes from chromosome 2 of Arabidopsis.</title>
        <authorList>
            <person name="Xiao Y.-L."/>
            <person name="Malik M."/>
            <person name="Whitelaw C.A."/>
            <person name="Town C.D."/>
        </authorList>
    </citation>
    <scope>NUCLEOTIDE SEQUENCE [LARGE SCALE MRNA]</scope>
    <source>
        <strain>cv. Columbia</strain>
    </source>
</reference>
<reference key="4">
    <citation type="submission" date="2005-02" db="EMBL/GenBank/DDBJ databases">
        <authorList>
            <person name="Underwood B.A."/>
            <person name="Xiao Y.-L."/>
            <person name="Moskal W.A. Jr."/>
            <person name="Monaghan E.L."/>
            <person name="Wang W."/>
            <person name="Redman J.C."/>
            <person name="Wu H.C."/>
            <person name="Utterback T."/>
            <person name="Town C.D."/>
        </authorList>
    </citation>
    <scope>NUCLEOTIDE SEQUENCE [LARGE SCALE MRNA]</scope>
    <source>
        <strain>cv. Columbia</strain>
    </source>
</reference>
<reference key="5">
    <citation type="journal article" date="2006" name="Genes Dev.">
        <title>A PHD finger protein involved in both the vernalization and photoperiod pathways in Arabidopsis.</title>
        <authorList>
            <person name="Sung S."/>
            <person name="Schmitz R.J."/>
            <person name="Amasino R.M."/>
        </authorList>
    </citation>
    <scope>NUCLEOTIDE SEQUENCE [MRNA] OF 18-529</scope>
    <scope>INDUCTION BY COLD</scope>
    <source>
        <strain>cv. Columbia</strain>
    </source>
</reference>
<reference key="6">
    <citation type="journal article" date="2007" name="Curr. Biol.">
        <title>The PHD finger protein VRN5 functions in the epigenetic silencing of Arabidopsis FLC.</title>
        <authorList>
            <person name="Greb T."/>
            <person name="Mylne J.S."/>
            <person name="Crevillen P."/>
            <person name="Geraldo N."/>
            <person name="An H."/>
            <person name="Gendall A.R."/>
            <person name="Dean C."/>
        </authorList>
    </citation>
    <scope>INDUCTION BY COLD</scope>
    <source>
        <strain>cv. Landsberg erecta</strain>
    </source>
</reference>
<gene>
    <name type="primary">VIL3</name>
    <name type="synonym">VEL2</name>
    <name type="ordered locus">At2g18880</name>
    <name type="ORF">F19F24.8</name>
</gene>
<name>VIL3_ARATH</name>
<organism>
    <name type="scientific">Arabidopsis thaliana</name>
    <name type="common">Mouse-ear cress</name>
    <dbReference type="NCBI Taxonomy" id="3702"/>
    <lineage>
        <taxon>Eukaryota</taxon>
        <taxon>Viridiplantae</taxon>
        <taxon>Streptophyta</taxon>
        <taxon>Embryophyta</taxon>
        <taxon>Tracheophyta</taxon>
        <taxon>Spermatophyta</taxon>
        <taxon>Magnoliopsida</taxon>
        <taxon>eudicotyledons</taxon>
        <taxon>Gunneridae</taxon>
        <taxon>Pentapetalae</taxon>
        <taxon>rosids</taxon>
        <taxon>malvids</taxon>
        <taxon>Brassicales</taxon>
        <taxon>Brassicaceae</taxon>
        <taxon>Camelineae</taxon>
        <taxon>Arabidopsis</taxon>
    </lineage>
</organism>